<dbReference type="EC" id="6.1.1.14" evidence="1"/>
<dbReference type="EMBL" id="CP000563">
    <property type="protein sequence ID" value="ABN59549.1"/>
    <property type="molecule type" value="Genomic_DNA"/>
</dbReference>
<dbReference type="RefSeq" id="WP_011845341.1">
    <property type="nucleotide sequence ID" value="NC_009052.1"/>
</dbReference>
<dbReference type="SMR" id="A3CYI6"/>
<dbReference type="STRING" id="325240.Sbal_0012"/>
<dbReference type="KEGG" id="sbl:Sbal_0012"/>
<dbReference type="HOGENOM" id="CLU_007220_2_2_6"/>
<dbReference type="OrthoDB" id="9775440at2"/>
<dbReference type="Proteomes" id="UP000001557">
    <property type="component" value="Chromosome"/>
</dbReference>
<dbReference type="GO" id="GO:0005829">
    <property type="term" value="C:cytosol"/>
    <property type="evidence" value="ECO:0007669"/>
    <property type="project" value="TreeGrafter"/>
</dbReference>
<dbReference type="GO" id="GO:0004814">
    <property type="term" value="F:arginine-tRNA ligase activity"/>
    <property type="evidence" value="ECO:0007669"/>
    <property type="project" value="InterPro"/>
</dbReference>
<dbReference type="GO" id="GO:0005524">
    <property type="term" value="F:ATP binding"/>
    <property type="evidence" value="ECO:0007669"/>
    <property type="project" value="UniProtKB-UniRule"/>
</dbReference>
<dbReference type="GO" id="GO:0004820">
    <property type="term" value="F:glycine-tRNA ligase activity"/>
    <property type="evidence" value="ECO:0007669"/>
    <property type="project" value="UniProtKB-UniRule"/>
</dbReference>
<dbReference type="GO" id="GO:0006420">
    <property type="term" value="P:arginyl-tRNA aminoacylation"/>
    <property type="evidence" value="ECO:0007669"/>
    <property type="project" value="InterPro"/>
</dbReference>
<dbReference type="GO" id="GO:0006426">
    <property type="term" value="P:glycyl-tRNA aminoacylation"/>
    <property type="evidence" value="ECO:0007669"/>
    <property type="project" value="UniProtKB-UniRule"/>
</dbReference>
<dbReference type="Gene3D" id="1.10.730.10">
    <property type="entry name" value="Isoleucyl-tRNA Synthetase, Domain 1"/>
    <property type="match status" value="1"/>
</dbReference>
<dbReference type="HAMAP" id="MF_00255">
    <property type="entry name" value="Gly_tRNA_synth_beta"/>
    <property type="match status" value="1"/>
</dbReference>
<dbReference type="InterPro" id="IPR008909">
    <property type="entry name" value="DALR_anticod-bd"/>
</dbReference>
<dbReference type="InterPro" id="IPR015944">
    <property type="entry name" value="Gly-tRNA-synth_bsu"/>
</dbReference>
<dbReference type="InterPro" id="IPR006194">
    <property type="entry name" value="Gly-tRNA-synth_heterodimer"/>
</dbReference>
<dbReference type="NCBIfam" id="TIGR00211">
    <property type="entry name" value="glyS"/>
    <property type="match status" value="1"/>
</dbReference>
<dbReference type="PANTHER" id="PTHR30075:SF2">
    <property type="entry name" value="GLYCINE--TRNA LIGASE, CHLOROPLASTIC_MITOCHONDRIAL 2"/>
    <property type="match status" value="1"/>
</dbReference>
<dbReference type="PANTHER" id="PTHR30075">
    <property type="entry name" value="GLYCYL-TRNA SYNTHETASE"/>
    <property type="match status" value="1"/>
</dbReference>
<dbReference type="Pfam" id="PF05746">
    <property type="entry name" value="DALR_1"/>
    <property type="match status" value="1"/>
</dbReference>
<dbReference type="Pfam" id="PF02092">
    <property type="entry name" value="tRNA_synt_2f"/>
    <property type="match status" value="1"/>
</dbReference>
<dbReference type="PRINTS" id="PR01045">
    <property type="entry name" value="TRNASYNTHGB"/>
</dbReference>
<dbReference type="SMART" id="SM00836">
    <property type="entry name" value="DALR_1"/>
    <property type="match status" value="1"/>
</dbReference>
<dbReference type="SUPFAM" id="SSF109604">
    <property type="entry name" value="HD-domain/PDEase-like"/>
    <property type="match status" value="1"/>
</dbReference>
<dbReference type="PROSITE" id="PS50861">
    <property type="entry name" value="AA_TRNA_LIGASE_II_GLYAB"/>
    <property type="match status" value="1"/>
</dbReference>
<reference key="1">
    <citation type="submission" date="2007-02" db="EMBL/GenBank/DDBJ databases">
        <title>Complete sequence of chromosome of Shewanella baltica OS155.</title>
        <authorList>
            <consortium name="US DOE Joint Genome Institute"/>
            <person name="Copeland A."/>
            <person name="Lucas S."/>
            <person name="Lapidus A."/>
            <person name="Barry K."/>
            <person name="Detter J.C."/>
            <person name="Glavina del Rio T."/>
            <person name="Hammon N."/>
            <person name="Israni S."/>
            <person name="Dalin E."/>
            <person name="Tice H."/>
            <person name="Pitluck S."/>
            <person name="Sims D.R."/>
            <person name="Brettin T."/>
            <person name="Bruce D."/>
            <person name="Han C."/>
            <person name="Tapia R."/>
            <person name="Brainard J."/>
            <person name="Schmutz J."/>
            <person name="Larimer F."/>
            <person name="Land M."/>
            <person name="Hauser L."/>
            <person name="Kyrpides N."/>
            <person name="Mikhailova N."/>
            <person name="Brettar I."/>
            <person name="Klappenbach J."/>
            <person name="Konstantinidis K."/>
            <person name="Rodrigues J."/>
            <person name="Tiedje J."/>
            <person name="Richardson P."/>
        </authorList>
    </citation>
    <scope>NUCLEOTIDE SEQUENCE [LARGE SCALE GENOMIC DNA]</scope>
    <source>
        <strain>OS155 / ATCC BAA-1091</strain>
    </source>
</reference>
<proteinExistence type="inferred from homology"/>
<accession>A3CYI6</accession>
<keyword id="KW-0030">Aminoacyl-tRNA synthetase</keyword>
<keyword id="KW-0067">ATP-binding</keyword>
<keyword id="KW-0963">Cytoplasm</keyword>
<keyword id="KW-0436">Ligase</keyword>
<keyword id="KW-0547">Nucleotide-binding</keyword>
<keyword id="KW-0648">Protein biosynthesis</keyword>
<keyword id="KW-1185">Reference proteome</keyword>
<organism>
    <name type="scientific">Shewanella baltica (strain OS155 / ATCC BAA-1091)</name>
    <dbReference type="NCBI Taxonomy" id="325240"/>
    <lineage>
        <taxon>Bacteria</taxon>
        <taxon>Pseudomonadati</taxon>
        <taxon>Pseudomonadota</taxon>
        <taxon>Gammaproteobacteria</taxon>
        <taxon>Alteromonadales</taxon>
        <taxon>Shewanellaceae</taxon>
        <taxon>Shewanella</taxon>
    </lineage>
</organism>
<evidence type="ECO:0000255" key="1">
    <source>
        <dbReference type="HAMAP-Rule" id="MF_00255"/>
    </source>
</evidence>
<feature type="chain" id="PRO_1000006400" description="Glycine--tRNA ligase beta subunit">
    <location>
        <begin position="1"/>
        <end position="689"/>
    </location>
</feature>
<protein>
    <recommendedName>
        <fullName evidence="1">Glycine--tRNA ligase beta subunit</fullName>
        <ecNumber evidence="1">6.1.1.14</ecNumber>
    </recommendedName>
    <alternativeName>
        <fullName evidence="1">Glycyl-tRNA synthetase beta subunit</fullName>
        <shortName evidence="1">GlyRS</shortName>
    </alternativeName>
</protein>
<gene>
    <name evidence="1" type="primary">glyS</name>
    <name type="ordered locus">Sbal_0012</name>
</gene>
<name>SYGB_SHEB5</name>
<comment type="catalytic activity">
    <reaction evidence="1">
        <text>tRNA(Gly) + glycine + ATP = glycyl-tRNA(Gly) + AMP + diphosphate</text>
        <dbReference type="Rhea" id="RHEA:16013"/>
        <dbReference type="Rhea" id="RHEA-COMP:9664"/>
        <dbReference type="Rhea" id="RHEA-COMP:9683"/>
        <dbReference type="ChEBI" id="CHEBI:30616"/>
        <dbReference type="ChEBI" id="CHEBI:33019"/>
        <dbReference type="ChEBI" id="CHEBI:57305"/>
        <dbReference type="ChEBI" id="CHEBI:78442"/>
        <dbReference type="ChEBI" id="CHEBI:78522"/>
        <dbReference type="ChEBI" id="CHEBI:456215"/>
        <dbReference type="EC" id="6.1.1.14"/>
    </reaction>
</comment>
<comment type="subunit">
    <text evidence="1">Tetramer of two alpha and two beta subunits.</text>
</comment>
<comment type="subcellular location">
    <subcellularLocation>
        <location evidence="1">Cytoplasm</location>
    </subcellularLocation>
</comment>
<comment type="similarity">
    <text evidence="1">Belongs to the class-II aminoacyl-tRNA synthetase family.</text>
</comment>
<sequence>MNFENLLIELGTEELPPKSLRKLAESFLANLTEELTKADLAFSSAVWYAAPRRLAINVTELALAQADKVVEKRGPAVSSAFDAEGKPTKAAEGWARGNGITVEQAERLVTDKGEWLVHNAKVEGVETKNLIAAMAQRALDKLPIPKPMRWGNNKTQFIRPVHTATMLLGSELIEGELLGIKSARTVRGHRFMGLKQFELAHADHYLTDLKEKGKVIADYESRKALIKADAEKAAAKIGGTADIEDSLLEEVASLVEWPVVLTASFEEKFLSVPSEALVYTMKGDQKYFPVFDDAGKLLPNFIFVTNIESKDPAQIISGNEKVVRPRLADAEFFFNTDKKHTLESRLPSLETVLFQQQLGTLKDKVNRISALAAFIAEQTGANAVDAARAGLLSKTDLMTNMVMEFTDTQGTMGMHYARLDGETEAVAVAMEEQYKPRFSGDTVPSAGVSCAVALADKLDTLVGIFGIGQAPKGAADPFALRRAAIGVLRIIVENKLPLDLVDLITKAQALHGTNLSNANASDEVLEFLMARFRAWYQDKGIGVDVILAVLARRPTRPADFDSRINAVSHFRSLEASSALAAANKRVSNILAKVEGALPTTINASLLTEAAEQALAAKLNELQPLLAPLFANADYQQALTLLAGLRESVDQFFEDVMVMADDEALKNNRLALLNNLREQFLHVADISLLQ</sequence>